<organism>
    <name type="scientific">Staphylococcus saprophyticus subsp. saprophyticus (strain ATCC 15305 / DSM 20229 / NCIMB 8711 / NCTC 7292 / S-41)</name>
    <dbReference type="NCBI Taxonomy" id="342451"/>
    <lineage>
        <taxon>Bacteria</taxon>
        <taxon>Bacillati</taxon>
        <taxon>Bacillota</taxon>
        <taxon>Bacilli</taxon>
        <taxon>Bacillales</taxon>
        <taxon>Staphylococcaceae</taxon>
        <taxon>Staphylococcus</taxon>
    </lineage>
</organism>
<dbReference type="EC" id="4.3.1.3" evidence="1"/>
<dbReference type="EMBL" id="AP008934">
    <property type="protein sequence ID" value="BAE17153.1"/>
    <property type="molecule type" value="Genomic_DNA"/>
</dbReference>
<dbReference type="RefSeq" id="WP_011302015.1">
    <property type="nucleotide sequence ID" value="NZ_MTGA01000035.1"/>
</dbReference>
<dbReference type="SMR" id="Q4A173"/>
<dbReference type="GeneID" id="3615463"/>
<dbReference type="KEGG" id="ssp:SSP0008"/>
<dbReference type="PATRIC" id="fig|342451.11.peg.8"/>
<dbReference type="eggNOG" id="COG2986">
    <property type="taxonomic scope" value="Bacteria"/>
</dbReference>
<dbReference type="HOGENOM" id="CLU_014801_4_0_9"/>
<dbReference type="OrthoDB" id="9806955at2"/>
<dbReference type="UniPathway" id="UPA00379">
    <property type="reaction ID" value="UER00549"/>
</dbReference>
<dbReference type="Proteomes" id="UP000006371">
    <property type="component" value="Chromosome"/>
</dbReference>
<dbReference type="GO" id="GO:0005737">
    <property type="term" value="C:cytoplasm"/>
    <property type="evidence" value="ECO:0007669"/>
    <property type="project" value="UniProtKB-SubCell"/>
</dbReference>
<dbReference type="GO" id="GO:0004397">
    <property type="term" value="F:histidine ammonia-lyase activity"/>
    <property type="evidence" value="ECO:0007669"/>
    <property type="project" value="UniProtKB-UniRule"/>
</dbReference>
<dbReference type="GO" id="GO:0019556">
    <property type="term" value="P:L-histidine catabolic process to glutamate and formamide"/>
    <property type="evidence" value="ECO:0007669"/>
    <property type="project" value="UniProtKB-UniPathway"/>
</dbReference>
<dbReference type="GO" id="GO:0019557">
    <property type="term" value="P:L-histidine catabolic process to glutamate and formate"/>
    <property type="evidence" value="ECO:0007669"/>
    <property type="project" value="UniProtKB-UniPathway"/>
</dbReference>
<dbReference type="CDD" id="cd00332">
    <property type="entry name" value="PAL-HAL"/>
    <property type="match status" value="1"/>
</dbReference>
<dbReference type="FunFam" id="1.10.275.10:FF:000008">
    <property type="entry name" value="Histidine ammonia-lyase"/>
    <property type="match status" value="1"/>
</dbReference>
<dbReference type="FunFam" id="1.20.200.10:FF:000003">
    <property type="entry name" value="Histidine ammonia-lyase"/>
    <property type="match status" value="1"/>
</dbReference>
<dbReference type="Gene3D" id="1.20.200.10">
    <property type="entry name" value="Fumarase/aspartase (Central domain)"/>
    <property type="match status" value="1"/>
</dbReference>
<dbReference type="Gene3D" id="1.10.275.10">
    <property type="entry name" value="Fumarase/aspartase (N-terminal domain)"/>
    <property type="match status" value="1"/>
</dbReference>
<dbReference type="HAMAP" id="MF_00229">
    <property type="entry name" value="His_ammonia_lyase"/>
    <property type="match status" value="1"/>
</dbReference>
<dbReference type="InterPro" id="IPR001106">
    <property type="entry name" value="Aromatic_Lyase"/>
</dbReference>
<dbReference type="InterPro" id="IPR024083">
    <property type="entry name" value="Fumarase/histidase_N"/>
</dbReference>
<dbReference type="InterPro" id="IPR005921">
    <property type="entry name" value="HutH"/>
</dbReference>
<dbReference type="InterPro" id="IPR008948">
    <property type="entry name" value="L-Aspartase-like"/>
</dbReference>
<dbReference type="InterPro" id="IPR022313">
    <property type="entry name" value="Phe/His_NH3-lyase_AS"/>
</dbReference>
<dbReference type="NCBIfam" id="TIGR01225">
    <property type="entry name" value="hutH"/>
    <property type="match status" value="1"/>
</dbReference>
<dbReference type="NCBIfam" id="NF006871">
    <property type="entry name" value="PRK09367.1"/>
    <property type="match status" value="1"/>
</dbReference>
<dbReference type="PANTHER" id="PTHR10362">
    <property type="entry name" value="HISTIDINE AMMONIA-LYASE"/>
    <property type="match status" value="1"/>
</dbReference>
<dbReference type="Pfam" id="PF00221">
    <property type="entry name" value="Lyase_aromatic"/>
    <property type="match status" value="1"/>
</dbReference>
<dbReference type="SUPFAM" id="SSF48557">
    <property type="entry name" value="L-aspartase-like"/>
    <property type="match status" value="1"/>
</dbReference>
<dbReference type="PROSITE" id="PS00488">
    <property type="entry name" value="PAL_HISTIDASE"/>
    <property type="match status" value="1"/>
</dbReference>
<proteinExistence type="inferred from homology"/>
<accession>Q4A173</accession>
<feature type="chain" id="PRO_1000021572" description="Histidine ammonia-lyase">
    <location>
        <begin position="1"/>
        <end position="499"/>
    </location>
</feature>
<feature type="modified residue" description="2,3-didehydroalanine (Ser)" evidence="1">
    <location>
        <position position="143"/>
    </location>
</feature>
<feature type="cross-link" description="5-imidazolinone (Ala-Gly)" evidence="1">
    <location>
        <begin position="142"/>
        <end position="144"/>
    </location>
</feature>
<protein>
    <recommendedName>
        <fullName evidence="1">Histidine ammonia-lyase</fullName>
        <shortName evidence="1">Histidase</shortName>
        <ecNumber evidence="1">4.3.1.3</ecNumber>
    </recommendedName>
</protein>
<comment type="catalytic activity">
    <reaction evidence="1">
        <text>L-histidine = trans-urocanate + NH4(+)</text>
        <dbReference type="Rhea" id="RHEA:21232"/>
        <dbReference type="ChEBI" id="CHEBI:17771"/>
        <dbReference type="ChEBI" id="CHEBI:28938"/>
        <dbReference type="ChEBI" id="CHEBI:57595"/>
        <dbReference type="EC" id="4.3.1.3"/>
    </reaction>
</comment>
<comment type="pathway">
    <text evidence="1">Amino-acid degradation; L-histidine degradation into L-glutamate; N-formimidoyl-L-glutamate from L-histidine: step 1/3.</text>
</comment>
<comment type="subcellular location">
    <subcellularLocation>
        <location evidence="1">Cytoplasm</location>
    </subcellularLocation>
</comment>
<comment type="PTM">
    <text evidence="1">Contains an active site 4-methylidene-imidazol-5-one (MIO), which is formed autocatalytically by cyclization and dehydration of residues Ala-Ser-Gly.</text>
</comment>
<comment type="similarity">
    <text evidence="1">Belongs to the PAL/histidase family.</text>
</comment>
<keyword id="KW-0963">Cytoplasm</keyword>
<keyword id="KW-0369">Histidine metabolism</keyword>
<keyword id="KW-0456">Lyase</keyword>
<keyword id="KW-1185">Reference proteome</keyword>
<gene>
    <name evidence="1" type="primary">hutH</name>
    <name type="ordered locus">SSP0008</name>
</gene>
<evidence type="ECO:0000255" key="1">
    <source>
        <dbReference type="HAMAP-Rule" id="MF_00229"/>
    </source>
</evidence>
<reference key="1">
    <citation type="journal article" date="2005" name="Proc. Natl. Acad. Sci. U.S.A.">
        <title>Whole genome sequence of Staphylococcus saprophyticus reveals the pathogenesis of uncomplicated urinary tract infection.</title>
        <authorList>
            <person name="Kuroda M."/>
            <person name="Yamashita A."/>
            <person name="Hirakawa H."/>
            <person name="Kumano M."/>
            <person name="Morikawa K."/>
            <person name="Higashide M."/>
            <person name="Maruyama A."/>
            <person name="Inose Y."/>
            <person name="Matoba K."/>
            <person name="Toh H."/>
            <person name="Kuhara S."/>
            <person name="Hattori M."/>
            <person name="Ohta T."/>
        </authorList>
    </citation>
    <scope>NUCLEOTIDE SEQUENCE [LARGE SCALE GENOMIC DNA]</scope>
    <source>
        <strain>ATCC 15305 / DSM 20229 / NCIMB 8711 / NCTC 7292 / S-41</strain>
    </source>
</reference>
<name>HUTH_STAS1</name>
<sequence>MTLQLNGEMLTINDIKTFLNKEDTVEVTQEALERVKKSRQTVEHIIENKETIYGITTGFGLFSDVRIDKDEYNQLQVNLIRSHACGVGKPFSEEVALVMMVLRLNTLLKGHSGTTVALVEQLVYYINNRIVPVIPQQGSLGASGDLAPLSHLALALIGEGNVFFKGEEVDSRYVLNQLNRNPIQLQAKEGLALINGTQAMTAQGVINYIEAEALGYQAEWIAALTHQALNGITDAYNEKVHKARNFQEQIDVAARMLDWLDGSELTTTQGDIRVQDAYTLRCIPQIHGASFQVFNYVKEKLEFEMNAANDNPLIFDEGDETLVISGGNFHGQPIAFALDFLKLGVSELANVSERRLERLVNPQLNNGLPAFLSPQPGLQSGAMIMQYAAASLVSENKTLAHPASVDSIPSSANQEDHVSMGTIASRHGYHIIENARRVLAIETIIALQAVEYKDIDKLSPKTYEKYQELRHIVPSITEDRQFHKDIEAVSQYLQDLAYM</sequence>